<dbReference type="EMBL" id="AM270330">
    <property type="protein sequence ID" value="CAK42224.1"/>
    <property type="molecule type" value="Genomic_DNA"/>
</dbReference>
<dbReference type="RefSeq" id="XP_001396594.2">
    <property type="nucleotide sequence ID" value="XM_001396557.2"/>
</dbReference>
<dbReference type="SMR" id="A2R4I6"/>
<dbReference type="EnsemblFungi" id="CAK42224">
    <property type="protein sequence ID" value="CAK42224"/>
    <property type="gene ID" value="An15g00550"/>
</dbReference>
<dbReference type="GeneID" id="4987654"/>
<dbReference type="KEGG" id="ang:An15g00550"/>
<dbReference type="VEuPathDB" id="FungiDB:An15g00550"/>
<dbReference type="HOGENOM" id="CLU_084507_0_0_1"/>
<dbReference type="Proteomes" id="UP000006706">
    <property type="component" value="Chromosome 3R"/>
</dbReference>
<dbReference type="GO" id="GO:0005783">
    <property type="term" value="C:endoplasmic reticulum"/>
    <property type="evidence" value="ECO:0007669"/>
    <property type="project" value="TreeGrafter"/>
</dbReference>
<dbReference type="GO" id="GO:0000774">
    <property type="term" value="F:adenyl-nucleotide exchange factor activity"/>
    <property type="evidence" value="ECO:0007669"/>
    <property type="project" value="TreeGrafter"/>
</dbReference>
<dbReference type="GO" id="GO:0006417">
    <property type="term" value="P:regulation of translation"/>
    <property type="evidence" value="ECO:0007669"/>
    <property type="project" value="UniProtKB-KW"/>
</dbReference>
<dbReference type="FunFam" id="1.25.10.10:FF:000434">
    <property type="entry name" value="Hsp70 nucleotide exchange factor fes1"/>
    <property type="match status" value="1"/>
</dbReference>
<dbReference type="Gene3D" id="1.25.10.10">
    <property type="entry name" value="Leucine-rich Repeat Variant"/>
    <property type="match status" value="1"/>
</dbReference>
<dbReference type="InterPro" id="IPR011989">
    <property type="entry name" value="ARM-like"/>
</dbReference>
<dbReference type="InterPro" id="IPR016024">
    <property type="entry name" value="ARM-type_fold"/>
</dbReference>
<dbReference type="InterPro" id="IPR050693">
    <property type="entry name" value="Hsp70_NEF-Inhibitors"/>
</dbReference>
<dbReference type="InterPro" id="IPR013918">
    <property type="entry name" value="Nucleotide_exch_fac_Fes1"/>
</dbReference>
<dbReference type="PANTHER" id="PTHR19316:SF18">
    <property type="entry name" value="HSP70-BINDING PROTEIN 1"/>
    <property type="match status" value="1"/>
</dbReference>
<dbReference type="PANTHER" id="PTHR19316">
    <property type="entry name" value="PROTEIN FOLDING REGULATOR"/>
    <property type="match status" value="1"/>
</dbReference>
<dbReference type="Pfam" id="PF08609">
    <property type="entry name" value="Fes1"/>
    <property type="match status" value="1"/>
</dbReference>
<dbReference type="Pfam" id="PF13513">
    <property type="entry name" value="HEAT_EZ"/>
    <property type="match status" value="1"/>
</dbReference>
<dbReference type="SUPFAM" id="SSF48371">
    <property type="entry name" value="ARM repeat"/>
    <property type="match status" value="1"/>
</dbReference>
<proteinExistence type="inferred from homology"/>
<evidence type="ECO:0000250" key="1"/>
<evidence type="ECO:0000256" key="2">
    <source>
        <dbReference type="SAM" id="MobiDB-lite"/>
    </source>
</evidence>
<evidence type="ECO:0000305" key="3"/>
<keyword id="KW-0963">Cytoplasm</keyword>
<keyword id="KW-1185">Reference proteome</keyword>
<keyword id="KW-0677">Repeat</keyword>
<keyword id="KW-0810">Translation regulation</keyword>
<feature type="chain" id="PRO_0000285385" description="Hsp70 nucleotide exchange factor fes1">
    <location>
        <begin position="1"/>
        <end position="287"/>
    </location>
</feature>
<feature type="repeat" description="ARM 1">
    <location>
        <begin position="32"/>
        <end position="73"/>
    </location>
</feature>
<feature type="repeat" description="ARM 2">
    <location>
        <begin position="92"/>
        <end position="131"/>
    </location>
</feature>
<feature type="repeat" description="ARM 3">
    <location>
        <begin position="134"/>
        <end position="174"/>
    </location>
</feature>
<feature type="repeat" description="ARM 4">
    <location>
        <begin position="192"/>
        <end position="231"/>
    </location>
</feature>
<feature type="region of interest" description="Disordered" evidence="2">
    <location>
        <begin position="16"/>
        <end position="46"/>
    </location>
</feature>
<feature type="compositionally biased region" description="Low complexity" evidence="2">
    <location>
        <begin position="18"/>
        <end position="34"/>
    </location>
</feature>
<sequence length="287" mass="31363">MDPNMNSLLKWSIKAATEEQSSGENNNNNNSGNNAPADPSRGLTPQMLSTLFGGPSEADLMKAAMEALRSDEVDLENKLIAFDNFEQLIESIDNANNLEPLGLWTPLVELLDHKEPDMRRMAAWCIGTAVQNNEKAQDKLIVLNALPKLVSLATADTTPVVRKKAVYAISSAVRNYQPAMDEVTKSLPEGYSRDKIDAGDMDAVDALMDKLRAHKPTFVTCTVDRMLSPSKPTSSSSGEHVVPLRGTRALRVDRARALTMLASGRHAVTGTRLSYEAQAIRPHLIPK</sequence>
<gene>
    <name type="primary">fes1</name>
    <name type="ORF">An15g00550</name>
</gene>
<name>FES1_ASPNC</name>
<accession>A2R4I6</accession>
<protein>
    <recommendedName>
        <fullName>Hsp70 nucleotide exchange factor fes1</fullName>
    </recommendedName>
</protein>
<organism>
    <name type="scientific">Aspergillus niger (strain ATCC MYA-4892 / CBS 513.88 / FGSC A1513)</name>
    <dbReference type="NCBI Taxonomy" id="425011"/>
    <lineage>
        <taxon>Eukaryota</taxon>
        <taxon>Fungi</taxon>
        <taxon>Dikarya</taxon>
        <taxon>Ascomycota</taxon>
        <taxon>Pezizomycotina</taxon>
        <taxon>Eurotiomycetes</taxon>
        <taxon>Eurotiomycetidae</taxon>
        <taxon>Eurotiales</taxon>
        <taxon>Aspergillaceae</taxon>
        <taxon>Aspergillus</taxon>
        <taxon>Aspergillus subgen. Circumdati</taxon>
    </lineage>
</organism>
<comment type="function">
    <text evidence="1">Functions as a nucleotide exchange factor (NEF) for Hsp70 chaperones which accelerates the release of ADP. Required for fully efficient Hsp70-mediated folding of proteins (By similarity).</text>
</comment>
<comment type="subcellular location">
    <subcellularLocation>
        <location evidence="1">Cytoplasm</location>
    </subcellularLocation>
</comment>
<comment type="similarity">
    <text evidence="3">Belongs to the FES1 family.</text>
</comment>
<reference key="1">
    <citation type="journal article" date="2007" name="Nat. Biotechnol.">
        <title>Genome sequencing and analysis of the versatile cell factory Aspergillus niger CBS 513.88.</title>
        <authorList>
            <person name="Pel H.J."/>
            <person name="de Winde J.H."/>
            <person name="Archer D.B."/>
            <person name="Dyer P.S."/>
            <person name="Hofmann G."/>
            <person name="Schaap P.J."/>
            <person name="Turner G."/>
            <person name="de Vries R.P."/>
            <person name="Albang R."/>
            <person name="Albermann K."/>
            <person name="Andersen M.R."/>
            <person name="Bendtsen J.D."/>
            <person name="Benen J.A.E."/>
            <person name="van den Berg M."/>
            <person name="Breestraat S."/>
            <person name="Caddick M.X."/>
            <person name="Contreras R."/>
            <person name="Cornell M."/>
            <person name="Coutinho P.M."/>
            <person name="Danchin E.G.J."/>
            <person name="Debets A.J.M."/>
            <person name="Dekker P."/>
            <person name="van Dijck P.W.M."/>
            <person name="van Dijk A."/>
            <person name="Dijkhuizen L."/>
            <person name="Driessen A.J.M."/>
            <person name="d'Enfert C."/>
            <person name="Geysens S."/>
            <person name="Goosen C."/>
            <person name="Groot G.S.P."/>
            <person name="de Groot P.W.J."/>
            <person name="Guillemette T."/>
            <person name="Henrissat B."/>
            <person name="Herweijer M."/>
            <person name="van den Hombergh J.P.T.W."/>
            <person name="van den Hondel C.A.M.J.J."/>
            <person name="van der Heijden R.T.J.M."/>
            <person name="van der Kaaij R.M."/>
            <person name="Klis F.M."/>
            <person name="Kools H.J."/>
            <person name="Kubicek C.P."/>
            <person name="van Kuyk P.A."/>
            <person name="Lauber J."/>
            <person name="Lu X."/>
            <person name="van der Maarel M.J.E.C."/>
            <person name="Meulenberg R."/>
            <person name="Menke H."/>
            <person name="Mortimer M.A."/>
            <person name="Nielsen J."/>
            <person name="Oliver S.G."/>
            <person name="Olsthoorn M."/>
            <person name="Pal K."/>
            <person name="van Peij N.N.M.E."/>
            <person name="Ram A.F.J."/>
            <person name="Rinas U."/>
            <person name="Roubos J.A."/>
            <person name="Sagt C.M.J."/>
            <person name="Schmoll M."/>
            <person name="Sun J."/>
            <person name="Ussery D."/>
            <person name="Varga J."/>
            <person name="Vervecken W."/>
            <person name="van de Vondervoort P.J.J."/>
            <person name="Wedler H."/>
            <person name="Woesten H.A.B."/>
            <person name="Zeng A.-P."/>
            <person name="van Ooyen A.J.J."/>
            <person name="Visser J."/>
            <person name="Stam H."/>
        </authorList>
    </citation>
    <scope>NUCLEOTIDE SEQUENCE [LARGE SCALE GENOMIC DNA]</scope>
    <source>
        <strain>ATCC MYA-4892 / CBS 513.88 / FGSC A1513</strain>
    </source>
</reference>